<evidence type="ECO:0000255" key="1">
    <source>
        <dbReference type="HAMAP-Rule" id="MF_00089"/>
    </source>
</evidence>
<name>THIC_DEHMC</name>
<dbReference type="EC" id="4.1.99.17" evidence="1"/>
<dbReference type="EMBL" id="AJ965256">
    <property type="protein sequence ID" value="CAI82908.1"/>
    <property type="molecule type" value="Genomic_DNA"/>
</dbReference>
<dbReference type="RefSeq" id="WP_011309259.1">
    <property type="nucleotide sequence ID" value="NC_007356.1"/>
</dbReference>
<dbReference type="SMR" id="Q3ZXE1"/>
<dbReference type="KEGG" id="deh:cbdbA749"/>
<dbReference type="HOGENOM" id="CLU_013181_2_2_0"/>
<dbReference type="UniPathway" id="UPA00060"/>
<dbReference type="Proteomes" id="UP000000433">
    <property type="component" value="Chromosome"/>
</dbReference>
<dbReference type="GO" id="GO:0051539">
    <property type="term" value="F:4 iron, 4 sulfur cluster binding"/>
    <property type="evidence" value="ECO:0007669"/>
    <property type="project" value="UniProtKB-KW"/>
</dbReference>
<dbReference type="GO" id="GO:0016830">
    <property type="term" value="F:carbon-carbon lyase activity"/>
    <property type="evidence" value="ECO:0007669"/>
    <property type="project" value="InterPro"/>
</dbReference>
<dbReference type="GO" id="GO:0008270">
    <property type="term" value="F:zinc ion binding"/>
    <property type="evidence" value="ECO:0007669"/>
    <property type="project" value="UniProtKB-UniRule"/>
</dbReference>
<dbReference type="GO" id="GO:0009228">
    <property type="term" value="P:thiamine biosynthetic process"/>
    <property type="evidence" value="ECO:0007669"/>
    <property type="project" value="UniProtKB-KW"/>
</dbReference>
<dbReference type="GO" id="GO:0009229">
    <property type="term" value="P:thiamine diphosphate biosynthetic process"/>
    <property type="evidence" value="ECO:0007669"/>
    <property type="project" value="UniProtKB-UniRule"/>
</dbReference>
<dbReference type="FunFam" id="3.20.20.540:FF:000001">
    <property type="entry name" value="Phosphomethylpyrimidine synthase"/>
    <property type="match status" value="1"/>
</dbReference>
<dbReference type="Gene3D" id="6.10.250.620">
    <property type="match status" value="1"/>
</dbReference>
<dbReference type="Gene3D" id="3.20.20.540">
    <property type="entry name" value="Radical SAM ThiC family, central domain"/>
    <property type="match status" value="1"/>
</dbReference>
<dbReference type="HAMAP" id="MF_00089">
    <property type="entry name" value="ThiC"/>
    <property type="match status" value="1"/>
</dbReference>
<dbReference type="InterPro" id="IPR037509">
    <property type="entry name" value="ThiC"/>
</dbReference>
<dbReference type="InterPro" id="IPR038521">
    <property type="entry name" value="ThiC/Bza_core_dom"/>
</dbReference>
<dbReference type="InterPro" id="IPR002817">
    <property type="entry name" value="ThiC/BzaA/B"/>
</dbReference>
<dbReference type="NCBIfam" id="NF009895">
    <property type="entry name" value="PRK13352.1"/>
    <property type="match status" value="1"/>
</dbReference>
<dbReference type="NCBIfam" id="TIGR00190">
    <property type="entry name" value="thiC"/>
    <property type="match status" value="1"/>
</dbReference>
<dbReference type="PANTHER" id="PTHR30557:SF1">
    <property type="entry name" value="PHOSPHOMETHYLPYRIMIDINE SYNTHASE, CHLOROPLASTIC"/>
    <property type="match status" value="1"/>
</dbReference>
<dbReference type="PANTHER" id="PTHR30557">
    <property type="entry name" value="THIAMINE BIOSYNTHESIS PROTEIN THIC"/>
    <property type="match status" value="1"/>
</dbReference>
<dbReference type="Pfam" id="PF01964">
    <property type="entry name" value="ThiC_Rad_SAM"/>
    <property type="match status" value="1"/>
</dbReference>
<dbReference type="SFLD" id="SFLDF00407">
    <property type="entry name" value="phosphomethylpyrimidine_syntha"/>
    <property type="match status" value="1"/>
</dbReference>
<dbReference type="SFLD" id="SFLDG01114">
    <property type="entry name" value="phosphomethylpyrimidine_syntha"/>
    <property type="match status" value="1"/>
</dbReference>
<dbReference type="SFLD" id="SFLDS00113">
    <property type="entry name" value="Radical_SAM_Phosphomethylpyrim"/>
    <property type="match status" value="1"/>
</dbReference>
<keyword id="KW-0004">4Fe-4S</keyword>
<keyword id="KW-0408">Iron</keyword>
<keyword id="KW-0411">Iron-sulfur</keyword>
<keyword id="KW-0456">Lyase</keyword>
<keyword id="KW-0479">Metal-binding</keyword>
<keyword id="KW-0949">S-adenosyl-L-methionine</keyword>
<keyword id="KW-0784">Thiamine biosynthesis</keyword>
<keyword id="KW-0862">Zinc</keyword>
<accession>Q3ZXE1</accession>
<comment type="function">
    <text evidence="1">Catalyzes the synthesis of the hydroxymethylpyrimidine phosphate (HMP-P) moiety of thiamine from aminoimidazole ribotide (AIR) in a radical S-adenosyl-L-methionine (SAM)-dependent reaction.</text>
</comment>
<comment type="catalytic activity">
    <reaction evidence="1">
        <text>5-amino-1-(5-phospho-beta-D-ribosyl)imidazole + S-adenosyl-L-methionine = 4-amino-2-methyl-5-(phosphooxymethyl)pyrimidine + CO + 5'-deoxyadenosine + formate + L-methionine + 3 H(+)</text>
        <dbReference type="Rhea" id="RHEA:24840"/>
        <dbReference type="ChEBI" id="CHEBI:15378"/>
        <dbReference type="ChEBI" id="CHEBI:15740"/>
        <dbReference type="ChEBI" id="CHEBI:17245"/>
        <dbReference type="ChEBI" id="CHEBI:17319"/>
        <dbReference type="ChEBI" id="CHEBI:57844"/>
        <dbReference type="ChEBI" id="CHEBI:58354"/>
        <dbReference type="ChEBI" id="CHEBI:59789"/>
        <dbReference type="ChEBI" id="CHEBI:137981"/>
        <dbReference type="EC" id="4.1.99.17"/>
    </reaction>
</comment>
<comment type="cofactor">
    <cofactor evidence="1">
        <name>[4Fe-4S] cluster</name>
        <dbReference type="ChEBI" id="CHEBI:49883"/>
    </cofactor>
    <text evidence="1">Binds 1 [4Fe-4S] cluster per subunit. The cluster is coordinated with 3 cysteines and an exchangeable S-adenosyl-L-methionine.</text>
</comment>
<comment type="pathway">
    <text evidence="1">Cofactor biosynthesis; thiamine diphosphate biosynthesis.</text>
</comment>
<comment type="similarity">
    <text evidence="1">Belongs to the ThiC family.</text>
</comment>
<protein>
    <recommendedName>
        <fullName evidence="1">Phosphomethylpyrimidine synthase</fullName>
        <ecNumber evidence="1">4.1.99.17</ecNumber>
    </recommendedName>
    <alternativeName>
        <fullName evidence="1">Hydroxymethylpyrimidine phosphate synthase</fullName>
        <shortName evidence="1">HMP-P synthase</shortName>
        <shortName evidence="1">HMP-phosphate synthase</shortName>
        <shortName evidence="1">HMPP synthase</shortName>
    </alternativeName>
    <alternativeName>
        <fullName evidence="1">Thiamine biosynthesis protein ThiC</fullName>
    </alternativeName>
</protein>
<organism>
    <name type="scientific">Dehalococcoides mccartyi (strain CBDB1)</name>
    <dbReference type="NCBI Taxonomy" id="255470"/>
    <lineage>
        <taxon>Bacteria</taxon>
        <taxon>Bacillati</taxon>
        <taxon>Chloroflexota</taxon>
        <taxon>Dehalococcoidia</taxon>
        <taxon>Dehalococcoidales</taxon>
        <taxon>Dehalococcoidaceae</taxon>
        <taxon>Dehalococcoides</taxon>
    </lineage>
</organism>
<gene>
    <name evidence="1" type="primary">thiC</name>
    <name type="ordered locus">cbdbA749</name>
</gene>
<sequence>MTQLKQARKGIVTPEMEAVAKTEGLQPEFILKGIADGNIVIPANKLRKNLKLCGIGKGLSTKVNANIGTSTDFGSVASEVEKLKMAEMVGADTIMDLSTGPKINTIRKAILENTCLPLGTVPVYQAAVEAKDHYGAMVKMTADDLFGAIESQAKEGVDFVTVHCGVTRQVIDTFKGQGRLTDIVSRGGTFTAGWMVFHGAENPLYEHFDRLLDICREYDVTLSLGDGLRPGCIADATDRAQVAELLVLGELVKRAREAEVQVMVEGPGHVPLNQIEANVRLQKSICEDAPFYVLGPLVTDIAPGYDHITGAIGGAIAAAAGADFLCYVTPAEHLSLPDVTDVRNGVIASRIAAHAADIVKGVNGAAERDHQMAIARKKLDWETQLKLSLDPEHARVTRDRFKTRGKACSMCGDFCAMELAEKHLGVSVSRC</sequence>
<reference key="1">
    <citation type="journal article" date="2005" name="Nat. Biotechnol.">
        <title>Genome sequence of the chlorinated compound-respiring bacterium Dehalococcoides species strain CBDB1.</title>
        <authorList>
            <person name="Kube M."/>
            <person name="Beck A."/>
            <person name="Zinder S.H."/>
            <person name="Kuhl H."/>
            <person name="Reinhardt R."/>
            <person name="Adrian L."/>
        </authorList>
    </citation>
    <scope>NUCLEOTIDE SEQUENCE [LARGE SCALE GENOMIC DNA]</scope>
    <source>
        <strain>CBDB1</strain>
    </source>
</reference>
<feature type="chain" id="PRO_0000242256" description="Phosphomethylpyrimidine synthase">
    <location>
        <begin position="1"/>
        <end position="431"/>
    </location>
</feature>
<feature type="binding site" evidence="1">
    <location>
        <position position="66"/>
    </location>
    <ligand>
        <name>substrate</name>
    </ligand>
</feature>
<feature type="binding site" evidence="1">
    <location>
        <position position="95"/>
    </location>
    <ligand>
        <name>substrate</name>
    </ligand>
</feature>
<feature type="binding site" evidence="1">
    <location>
        <position position="124"/>
    </location>
    <ligand>
        <name>substrate</name>
    </ligand>
</feature>
<feature type="binding site" evidence="1">
    <location>
        <position position="163"/>
    </location>
    <ligand>
        <name>substrate</name>
    </ligand>
</feature>
<feature type="binding site" evidence="1">
    <location>
        <begin position="185"/>
        <end position="187"/>
    </location>
    <ligand>
        <name>substrate</name>
    </ligand>
</feature>
<feature type="binding site" evidence="1">
    <location>
        <begin position="226"/>
        <end position="229"/>
    </location>
    <ligand>
        <name>substrate</name>
    </ligand>
</feature>
<feature type="binding site" evidence="1">
    <location>
        <position position="265"/>
    </location>
    <ligand>
        <name>substrate</name>
    </ligand>
</feature>
<feature type="binding site" evidence="1">
    <location>
        <position position="269"/>
    </location>
    <ligand>
        <name>Zn(2+)</name>
        <dbReference type="ChEBI" id="CHEBI:29105"/>
    </ligand>
</feature>
<feature type="binding site" evidence="1">
    <location>
        <position position="292"/>
    </location>
    <ligand>
        <name>substrate</name>
    </ligand>
</feature>
<feature type="binding site" evidence="1">
    <location>
        <position position="333"/>
    </location>
    <ligand>
        <name>Zn(2+)</name>
        <dbReference type="ChEBI" id="CHEBI:29105"/>
    </ligand>
</feature>
<feature type="binding site" evidence="1">
    <location>
        <position position="408"/>
    </location>
    <ligand>
        <name>[4Fe-4S] cluster</name>
        <dbReference type="ChEBI" id="CHEBI:49883"/>
        <note>4Fe-4S-S-AdoMet</note>
    </ligand>
</feature>
<feature type="binding site" evidence="1">
    <location>
        <position position="411"/>
    </location>
    <ligand>
        <name>[4Fe-4S] cluster</name>
        <dbReference type="ChEBI" id="CHEBI:49883"/>
        <note>4Fe-4S-S-AdoMet</note>
    </ligand>
</feature>
<feature type="binding site" evidence="1">
    <location>
        <position position="415"/>
    </location>
    <ligand>
        <name>[4Fe-4S] cluster</name>
        <dbReference type="ChEBI" id="CHEBI:49883"/>
        <note>4Fe-4S-S-AdoMet</note>
    </ligand>
</feature>
<proteinExistence type="inferred from homology"/>